<name>FLIG_VIBCH</name>
<sequence>MAKDNKDGGEVVESTIDISEIPGEEKAAILLLSLNEEDAAGIIRHLEPKQVQRVGSAMARAKDLSQTKVSAVHRAFLEDIQKYTNIGMGSEDFLRNALVAALGADKANNLVDQILLGTGSKGLDSLKWMDPRQVASIIINEHPQIQTIVLSYLEPDQSAEILAQFAQRDALDLLMRIANLEEVQPSALAELNEIMEKQFAGQAGAQAAKIGGLKAAADIMNYLDNNIESVLMEGMREKDEDLATQIQDLMFVFENLVEVDDQGIQKLLRDVPQDVLQKALKGADDTLREKIFKNMSKRAAEMMKDDLEAMPPIKVSDVEAAQKEILSIARRMADNGEIMLGGGADEFL</sequence>
<feature type="chain" id="PRO_0000184098" description="Flagellar motor switch protein FliG">
    <location>
        <begin position="1"/>
        <end position="348"/>
    </location>
</feature>
<feature type="short sequence motif" description="Part of the EHPQR-motif">
    <location>
        <begin position="141"/>
        <end position="144"/>
    </location>
</feature>
<feature type="site" description="Part of the EHPQR-motif">
    <location>
        <position position="176"/>
    </location>
</feature>
<keyword id="KW-0975">Bacterial flagellum</keyword>
<keyword id="KW-0997">Cell inner membrane</keyword>
<keyword id="KW-1003">Cell membrane</keyword>
<keyword id="KW-0145">Chemotaxis</keyword>
<keyword id="KW-0283">Flagellar rotation</keyword>
<keyword id="KW-0472">Membrane</keyword>
<keyword id="KW-1185">Reference proteome</keyword>
<evidence type="ECO:0000250" key="1"/>
<evidence type="ECO:0000305" key="2"/>
<accession>Q9X4Q9</accession>
<accession>Q7DCT8</accession>
<dbReference type="EMBL" id="AF117332">
    <property type="protein sequence ID" value="AAD30267.1"/>
    <property type="molecule type" value="Genomic_DNA"/>
</dbReference>
<dbReference type="EMBL" id="AE003852">
    <property type="protein sequence ID" value="AAF95277.1"/>
    <property type="molecule type" value="Genomic_DNA"/>
</dbReference>
<dbReference type="PIR" id="D82114">
    <property type="entry name" value="D82114"/>
</dbReference>
<dbReference type="RefSeq" id="NP_231763.1">
    <property type="nucleotide sequence ID" value="NC_002505.1"/>
</dbReference>
<dbReference type="RefSeq" id="WP_001030089.1">
    <property type="nucleotide sequence ID" value="NZ_LT906614.1"/>
</dbReference>
<dbReference type="SMR" id="Q9X4Q9"/>
<dbReference type="STRING" id="243277.VC_2132"/>
<dbReference type="DNASU" id="2613388"/>
<dbReference type="EnsemblBacteria" id="AAF95277">
    <property type="protein sequence ID" value="AAF95277"/>
    <property type="gene ID" value="VC_2132"/>
</dbReference>
<dbReference type="GeneID" id="69719248"/>
<dbReference type="KEGG" id="vch:VC_2132"/>
<dbReference type="PATRIC" id="fig|243277.26.peg.2037"/>
<dbReference type="eggNOG" id="COG1536">
    <property type="taxonomic scope" value="Bacteria"/>
</dbReference>
<dbReference type="HOGENOM" id="CLU_047835_2_0_6"/>
<dbReference type="Proteomes" id="UP000000584">
    <property type="component" value="Chromosome 1"/>
</dbReference>
<dbReference type="GO" id="GO:0009425">
    <property type="term" value="C:bacterial-type flagellum basal body"/>
    <property type="evidence" value="ECO:0007669"/>
    <property type="project" value="UniProtKB-SubCell"/>
</dbReference>
<dbReference type="GO" id="GO:0005886">
    <property type="term" value="C:plasma membrane"/>
    <property type="evidence" value="ECO:0007669"/>
    <property type="project" value="UniProtKB-SubCell"/>
</dbReference>
<dbReference type="GO" id="GO:0003774">
    <property type="term" value="F:cytoskeletal motor activity"/>
    <property type="evidence" value="ECO:0007669"/>
    <property type="project" value="InterPro"/>
</dbReference>
<dbReference type="GO" id="GO:0071973">
    <property type="term" value="P:bacterial-type flagellum-dependent cell motility"/>
    <property type="evidence" value="ECO:0000318"/>
    <property type="project" value="GO_Central"/>
</dbReference>
<dbReference type="GO" id="GO:0006935">
    <property type="term" value="P:chemotaxis"/>
    <property type="evidence" value="ECO:0007669"/>
    <property type="project" value="UniProtKB-KW"/>
</dbReference>
<dbReference type="FunFam" id="1.10.220.30:FF:000001">
    <property type="entry name" value="Flagellar motor switch protein FliG"/>
    <property type="match status" value="1"/>
</dbReference>
<dbReference type="FunFam" id="1.10.220.30:FF:000004">
    <property type="entry name" value="Flagellar motor switch protein FliG"/>
    <property type="match status" value="1"/>
</dbReference>
<dbReference type="FunFam" id="1.10.220.30:FF:000007">
    <property type="entry name" value="Flagellar motor switch protein FliG"/>
    <property type="match status" value="1"/>
</dbReference>
<dbReference type="Gene3D" id="1.10.220.30">
    <property type="match status" value="3"/>
</dbReference>
<dbReference type="InterPro" id="IPR000090">
    <property type="entry name" value="Flg_Motor_Flig"/>
</dbReference>
<dbReference type="InterPro" id="IPR023087">
    <property type="entry name" value="Flg_Motor_Flig_C"/>
</dbReference>
<dbReference type="InterPro" id="IPR011002">
    <property type="entry name" value="FliG_a-hlx"/>
</dbReference>
<dbReference type="InterPro" id="IPR032779">
    <property type="entry name" value="FliG_M"/>
</dbReference>
<dbReference type="InterPro" id="IPR028263">
    <property type="entry name" value="FliG_N"/>
</dbReference>
<dbReference type="NCBIfam" id="TIGR00207">
    <property type="entry name" value="fliG"/>
    <property type="match status" value="1"/>
</dbReference>
<dbReference type="PANTHER" id="PTHR30534">
    <property type="entry name" value="FLAGELLAR MOTOR SWITCH PROTEIN FLIG"/>
    <property type="match status" value="1"/>
</dbReference>
<dbReference type="PANTHER" id="PTHR30534:SF0">
    <property type="entry name" value="FLAGELLAR MOTOR SWITCH PROTEIN FLIG"/>
    <property type="match status" value="1"/>
</dbReference>
<dbReference type="Pfam" id="PF01706">
    <property type="entry name" value="FliG_C"/>
    <property type="match status" value="1"/>
</dbReference>
<dbReference type="Pfam" id="PF14841">
    <property type="entry name" value="FliG_M"/>
    <property type="match status" value="1"/>
</dbReference>
<dbReference type="Pfam" id="PF14842">
    <property type="entry name" value="FliG_N"/>
    <property type="match status" value="1"/>
</dbReference>
<dbReference type="PIRSF" id="PIRSF003161">
    <property type="entry name" value="FliG"/>
    <property type="match status" value="1"/>
</dbReference>
<dbReference type="PRINTS" id="PR00954">
    <property type="entry name" value="FLGMOTORFLIG"/>
</dbReference>
<dbReference type="SUPFAM" id="SSF48029">
    <property type="entry name" value="FliG"/>
    <property type="match status" value="2"/>
</dbReference>
<organism>
    <name type="scientific">Vibrio cholerae serotype O1 (strain ATCC 39315 / El Tor Inaba N16961)</name>
    <dbReference type="NCBI Taxonomy" id="243277"/>
    <lineage>
        <taxon>Bacteria</taxon>
        <taxon>Pseudomonadati</taxon>
        <taxon>Pseudomonadota</taxon>
        <taxon>Gammaproteobacteria</taxon>
        <taxon>Vibrionales</taxon>
        <taxon>Vibrionaceae</taxon>
        <taxon>Vibrio</taxon>
    </lineage>
</organism>
<gene>
    <name type="primary">fliG</name>
    <name type="ordered locus">VC_2132</name>
</gene>
<comment type="function">
    <text evidence="1">FliG is one of three proteins (FliG, FliN, FliM) that forms the rotor-mounted switch complex (C ring), located at the base of the basal body. This complex interacts with the CheY and CheZ chemotaxis proteins, in addition to contacting components of the motor that determine the direction of flagellar rotation (By similarity).</text>
</comment>
<comment type="subcellular location">
    <subcellularLocation>
        <location evidence="1">Cell inner membrane</location>
        <topology evidence="1">Peripheral membrane protein</topology>
        <orientation evidence="1">Cytoplasmic side</orientation>
    </subcellularLocation>
    <subcellularLocation>
        <location evidence="1">Bacterial flagellum basal body</location>
    </subcellularLocation>
</comment>
<comment type="similarity">
    <text evidence="2">Belongs to the FliG family.</text>
</comment>
<protein>
    <recommendedName>
        <fullName>Flagellar motor switch protein FliG</fullName>
    </recommendedName>
</protein>
<reference key="1">
    <citation type="submission" date="1998-12" db="EMBL/GenBank/DDBJ databases">
        <title>Deletion in the fliG gene of Vibrio cholerae result in non-motile bacteria.</title>
        <authorList>
            <person name="Hase C.C."/>
            <person name="Mekalanos J.J."/>
        </authorList>
    </citation>
    <scope>NUCLEOTIDE SEQUENCE [GENOMIC DNA]</scope>
    <source>
        <strain>ATCC 39315 / El Tor Inaba N16961</strain>
    </source>
</reference>
<reference key="2">
    <citation type="journal article" date="2000" name="Nature">
        <title>DNA sequence of both chromosomes of the cholera pathogen Vibrio cholerae.</title>
        <authorList>
            <person name="Heidelberg J.F."/>
            <person name="Eisen J.A."/>
            <person name="Nelson W.C."/>
            <person name="Clayton R.A."/>
            <person name="Gwinn M.L."/>
            <person name="Dodson R.J."/>
            <person name="Haft D.H."/>
            <person name="Hickey E.K."/>
            <person name="Peterson J.D."/>
            <person name="Umayam L.A."/>
            <person name="Gill S.R."/>
            <person name="Nelson K.E."/>
            <person name="Read T.D."/>
            <person name="Tettelin H."/>
            <person name="Richardson D.L."/>
            <person name="Ermolaeva M.D."/>
            <person name="Vamathevan J.J."/>
            <person name="Bass S."/>
            <person name="Qin H."/>
            <person name="Dragoi I."/>
            <person name="Sellers P."/>
            <person name="McDonald L.A."/>
            <person name="Utterback T.R."/>
            <person name="Fleischmann R.D."/>
            <person name="Nierman W.C."/>
            <person name="White O."/>
            <person name="Salzberg S.L."/>
            <person name="Smith H.O."/>
            <person name="Colwell R.R."/>
            <person name="Mekalanos J.J."/>
            <person name="Venter J.C."/>
            <person name="Fraser C.M."/>
        </authorList>
    </citation>
    <scope>NUCLEOTIDE SEQUENCE [LARGE SCALE GENOMIC DNA]</scope>
    <source>
        <strain>ATCC 39315 / El Tor Inaba N16961</strain>
    </source>
</reference>
<proteinExistence type="inferred from homology"/>